<sequence>MFEKYFPNVDLTELWNATYETLYMTLISLLFAFVIGVILGLLLFLTSKGSLWQNKAVNSVIAAVVNIFRSIPFLILIILLLGFTKFLVGTILGPNAALPALVIGSAPFYARLVEIALREVDKGVIEAAKSMGAKTSTIIFKVLIPESMPALISGITVTAIALIGSTAIAGAIGSGGLGNLAYVEGYQSNNADVTFVATVFILIIVFIIQIIGDLITNIIDKR</sequence>
<feature type="chain" id="PRO_0000383644" description="Methionine import system permease protein MetP">
    <location>
        <begin position="1"/>
        <end position="222"/>
    </location>
</feature>
<feature type="transmembrane region" description="Helical" evidence="2">
    <location>
        <begin position="25"/>
        <end position="45"/>
    </location>
</feature>
<feature type="transmembrane region" description="Helical" evidence="2">
    <location>
        <begin position="73"/>
        <end position="93"/>
    </location>
</feature>
<feature type="transmembrane region" description="Helical" evidence="2">
    <location>
        <begin position="97"/>
        <end position="117"/>
    </location>
</feature>
<feature type="transmembrane region" description="Helical" evidence="2">
    <location>
        <begin position="152"/>
        <end position="172"/>
    </location>
</feature>
<feature type="transmembrane region" description="Helical" evidence="2">
    <location>
        <begin position="195"/>
        <end position="215"/>
    </location>
</feature>
<feature type="domain" description="ABC transmembrane type-1" evidence="2">
    <location>
        <begin position="18"/>
        <end position="212"/>
    </location>
</feature>
<proteinExistence type="evidence at protein level"/>
<gene>
    <name type="primary">metP</name>
    <name type="synonym">yusB</name>
    <name type="ordered locus">BSU32740</name>
</gene>
<dbReference type="EMBL" id="AL009126">
    <property type="protein sequence ID" value="CAB15263.1"/>
    <property type="molecule type" value="Genomic_DNA"/>
</dbReference>
<dbReference type="PIR" id="C70020">
    <property type="entry name" value="C70020"/>
</dbReference>
<dbReference type="RefSeq" id="NP_391153.1">
    <property type="nucleotide sequence ID" value="NC_000964.3"/>
</dbReference>
<dbReference type="RefSeq" id="WP_003228593.1">
    <property type="nucleotide sequence ID" value="NZ_OZ025638.1"/>
</dbReference>
<dbReference type="SMR" id="O32168"/>
<dbReference type="FunCoup" id="O32168">
    <property type="interactions" value="152"/>
</dbReference>
<dbReference type="STRING" id="224308.BSU32740"/>
<dbReference type="TCDB" id="3.A.1.24.2">
    <property type="family name" value="the atp-binding cassette (abc) superfamily"/>
</dbReference>
<dbReference type="PaxDb" id="224308-BSU32740"/>
<dbReference type="EnsemblBacteria" id="CAB15263">
    <property type="protein sequence ID" value="CAB15263"/>
    <property type="gene ID" value="BSU_32740"/>
</dbReference>
<dbReference type="GeneID" id="86872186"/>
<dbReference type="GeneID" id="936709"/>
<dbReference type="KEGG" id="bsu:BSU32740"/>
<dbReference type="PATRIC" id="fig|224308.179.peg.3547"/>
<dbReference type="eggNOG" id="COG2011">
    <property type="taxonomic scope" value="Bacteria"/>
</dbReference>
<dbReference type="InParanoid" id="O32168"/>
<dbReference type="OrthoDB" id="9793490at2"/>
<dbReference type="PhylomeDB" id="O32168"/>
<dbReference type="BioCyc" id="BSUB:BSU32740-MONOMER"/>
<dbReference type="Proteomes" id="UP000001570">
    <property type="component" value="Chromosome"/>
</dbReference>
<dbReference type="GO" id="GO:0005886">
    <property type="term" value="C:plasma membrane"/>
    <property type="evidence" value="ECO:0000318"/>
    <property type="project" value="GO_Central"/>
</dbReference>
<dbReference type="GO" id="GO:0048473">
    <property type="term" value="P:D-methionine transmembrane transport"/>
    <property type="evidence" value="ECO:0000318"/>
    <property type="project" value="GO_Central"/>
</dbReference>
<dbReference type="CDD" id="cd06261">
    <property type="entry name" value="TM_PBP2"/>
    <property type="match status" value="1"/>
</dbReference>
<dbReference type="FunFam" id="1.10.3720.10:FF:000002">
    <property type="entry name" value="D-methionine ABC transporter permease MetI"/>
    <property type="match status" value="1"/>
</dbReference>
<dbReference type="Gene3D" id="1.10.3720.10">
    <property type="entry name" value="MetI-like"/>
    <property type="match status" value="1"/>
</dbReference>
<dbReference type="InterPro" id="IPR051322">
    <property type="entry name" value="AA_ABC_Transporter_Permease"/>
</dbReference>
<dbReference type="InterPro" id="IPR000515">
    <property type="entry name" value="MetI-like"/>
</dbReference>
<dbReference type="InterPro" id="IPR035906">
    <property type="entry name" value="MetI-like_sf"/>
</dbReference>
<dbReference type="PANTHER" id="PTHR30450">
    <property type="entry name" value="ABC TRANSPORTER PERMEASE"/>
    <property type="match status" value="1"/>
</dbReference>
<dbReference type="PANTHER" id="PTHR30450:SF1">
    <property type="entry name" value="D-METHIONINE TRANSPORT SYSTEM PERMEASE PROTEIN METI-RELATED"/>
    <property type="match status" value="1"/>
</dbReference>
<dbReference type="Pfam" id="PF00528">
    <property type="entry name" value="BPD_transp_1"/>
    <property type="match status" value="1"/>
</dbReference>
<dbReference type="SUPFAM" id="SSF161098">
    <property type="entry name" value="MetI-like"/>
    <property type="match status" value="1"/>
</dbReference>
<dbReference type="PROSITE" id="PS50928">
    <property type="entry name" value="ABC_TM1"/>
    <property type="match status" value="1"/>
</dbReference>
<protein>
    <recommendedName>
        <fullName>Methionine import system permease protein MetP</fullName>
    </recommendedName>
</protein>
<reference key="1">
    <citation type="journal article" date="1997" name="Nature">
        <title>The complete genome sequence of the Gram-positive bacterium Bacillus subtilis.</title>
        <authorList>
            <person name="Kunst F."/>
            <person name="Ogasawara N."/>
            <person name="Moszer I."/>
            <person name="Albertini A.M."/>
            <person name="Alloni G."/>
            <person name="Azevedo V."/>
            <person name="Bertero M.G."/>
            <person name="Bessieres P."/>
            <person name="Bolotin A."/>
            <person name="Borchert S."/>
            <person name="Borriss R."/>
            <person name="Boursier L."/>
            <person name="Brans A."/>
            <person name="Braun M."/>
            <person name="Brignell S.C."/>
            <person name="Bron S."/>
            <person name="Brouillet S."/>
            <person name="Bruschi C.V."/>
            <person name="Caldwell B."/>
            <person name="Capuano V."/>
            <person name="Carter N.M."/>
            <person name="Choi S.-K."/>
            <person name="Codani J.-J."/>
            <person name="Connerton I.F."/>
            <person name="Cummings N.J."/>
            <person name="Daniel R.A."/>
            <person name="Denizot F."/>
            <person name="Devine K.M."/>
            <person name="Duesterhoeft A."/>
            <person name="Ehrlich S.D."/>
            <person name="Emmerson P.T."/>
            <person name="Entian K.-D."/>
            <person name="Errington J."/>
            <person name="Fabret C."/>
            <person name="Ferrari E."/>
            <person name="Foulger D."/>
            <person name="Fritz C."/>
            <person name="Fujita M."/>
            <person name="Fujita Y."/>
            <person name="Fuma S."/>
            <person name="Galizzi A."/>
            <person name="Galleron N."/>
            <person name="Ghim S.-Y."/>
            <person name="Glaser P."/>
            <person name="Goffeau A."/>
            <person name="Golightly E.J."/>
            <person name="Grandi G."/>
            <person name="Guiseppi G."/>
            <person name="Guy B.J."/>
            <person name="Haga K."/>
            <person name="Haiech J."/>
            <person name="Harwood C.R."/>
            <person name="Henaut A."/>
            <person name="Hilbert H."/>
            <person name="Holsappel S."/>
            <person name="Hosono S."/>
            <person name="Hullo M.-F."/>
            <person name="Itaya M."/>
            <person name="Jones L.-M."/>
            <person name="Joris B."/>
            <person name="Karamata D."/>
            <person name="Kasahara Y."/>
            <person name="Klaerr-Blanchard M."/>
            <person name="Klein C."/>
            <person name="Kobayashi Y."/>
            <person name="Koetter P."/>
            <person name="Koningstein G."/>
            <person name="Krogh S."/>
            <person name="Kumano M."/>
            <person name="Kurita K."/>
            <person name="Lapidus A."/>
            <person name="Lardinois S."/>
            <person name="Lauber J."/>
            <person name="Lazarevic V."/>
            <person name="Lee S.-M."/>
            <person name="Levine A."/>
            <person name="Liu H."/>
            <person name="Masuda S."/>
            <person name="Mauel C."/>
            <person name="Medigue C."/>
            <person name="Medina N."/>
            <person name="Mellado R.P."/>
            <person name="Mizuno M."/>
            <person name="Moestl D."/>
            <person name="Nakai S."/>
            <person name="Noback M."/>
            <person name="Noone D."/>
            <person name="O'Reilly M."/>
            <person name="Ogawa K."/>
            <person name="Ogiwara A."/>
            <person name="Oudega B."/>
            <person name="Park S.-H."/>
            <person name="Parro V."/>
            <person name="Pohl T.M."/>
            <person name="Portetelle D."/>
            <person name="Porwollik S."/>
            <person name="Prescott A.M."/>
            <person name="Presecan E."/>
            <person name="Pujic P."/>
            <person name="Purnelle B."/>
            <person name="Rapoport G."/>
            <person name="Rey M."/>
            <person name="Reynolds S."/>
            <person name="Rieger M."/>
            <person name="Rivolta C."/>
            <person name="Rocha E."/>
            <person name="Roche B."/>
            <person name="Rose M."/>
            <person name="Sadaie Y."/>
            <person name="Sato T."/>
            <person name="Scanlan E."/>
            <person name="Schleich S."/>
            <person name="Schroeter R."/>
            <person name="Scoffone F."/>
            <person name="Sekiguchi J."/>
            <person name="Sekowska A."/>
            <person name="Seror S.J."/>
            <person name="Serror P."/>
            <person name="Shin B.-S."/>
            <person name="Soldo B."/>
            <person name="Sorokin A."/>
            <person name="Tacconi E."/>
            <person name="Takagi T."/>
            <person name="Takahashi H."/>
            <person name="Takemaru K."/>
            <person name="Takeuchi M."/>
            <person name="Tamakoshi A."/>
            <person name="Tanaka T."/>
            <person name="Terpstra P."/>
            <person name="Tognoni A."/>
            <person name="Tosato V."/>
            <person name="Uchiyama S."/>
            <person name="Vandenbol M."/>
            <person name="Vannier F."/>
            <person name="Vassarotti A."/>
            <person name="Viari A."/>
            <person name="Wambutt R."/>
            <person name="Wedler E."/>
            <person name="Wedler H."/>
            <person name="Weitzenegger T."/>
            <person name="Winters P."/>
            <person name="Wipat A."/>
            <person name="Yamamoto H."/>
            <person name="Yamane K."/>
            <person name="Yasumoto K."/>
            <person name="Yata K."/>
            <person name="Yoshida K."/>
            <person name="Yoshikawa H.-F."/>
            <person name="Zumstein E."/>
            <person name="Yoshikawa H."/>
            <person name="Danchin A."/>
        </authorList>
    </citation>
    <scope>NUCLEOTIDE SEQUENCE [LARGE SCALE GENOMIC DNA]</scope>
    <source>
        <strain>168</strain>
    </source>
</reference>
<reference key="2">
    <citation type="journal article" date="2004" name="Res. Microbiol.">
        <title>The metNPQ operon of Bacillus subtilis encodes an ABC permease transporting methionine sulfoxide, D- and L-methionine.</title>
        <authorList>
            <person name="Hullo M.-F."/>
            <person name="Auger S."/>
            <person name="Dassa E."/>
            <person name="Danchin A."/>
            <person name="Martin-Verstraete I."/>
        </authorList>
    </citation>
    <scope>FUNCTION IN METHIONINE AND METHIONINE SULFOXIDE TRANSPORT</scope>
    <scope>INDUCTION</scope>
    <source>
        <strain>168</strain>
    </source>
</reference>
<comment type="function">
    <text evidence="3 4">Part of the ABC transporter complex MetNPQ involved in methionine import. Responsible for the translocation of the substrate across the membrane (Probable). It has also been shown to be involved in methionine sulfoxide transport.</text>
</comment>
<comment type="subunit">
    <text evidence="1">The complex is composed of two ATP-binding proteins (MetN), two transmembrane proteins (MetP) and a solute-binding protein (MetQ).</text>
</comment>
<comment type="subcellular location">
    <subcellularLocation>
        <location evidence="4">Cell membrane</location>
        <topology evidence="2">Multi-pass membrane protein</topology>
    </subcellularLocation>
</comment>
<comment type="induction">
    <text evidence="3">Repressed by methionine via the S-box system.</text>
</comment>
<comment type="similarity">
    <text evidence="4">Belongs to the binding-protein-dependent transport system permease family. CysTW subfamily.</text>
</comment>
<organism>
    <name type="scientific">Bacillus subtilis (strain 168)</name>
    <dbReference type="NCBI Taxonomy" id="224308"/>
    <lineage>
        <taxon>Bacteria</taxon>
        <taxon>Bacillati</taxon>
        <taxon>Bacillota</taxon>
        <taxon>Bacilli</taxon>
        <taxon>Bacillales</taxon>
        <taxon>Bacillaceae</taxon>
        <taxon>Bacillus</taxon>
    </lineage>
</organism>
<keyword id="KW-0029">Amino-acid transport</keyword>
<keyword id="KW-1003">Cell membrane</keyword>
<keyword id="KW-0472">Membrane</keyword>
<keyword id="KW-1185">Reference proteome</keyword>
<keyword id="KW-0812">Transmembrane</keyword>
<keyword id="KW-1133">Transmembrane helix</keyword>
<keyword id="KW-0813">Transport</keyword>
<name>METP_BACSU</name>
<accession>O32168</accession>
<evidence type="ECO:0000250" key="1"/>
<evidence type="ECO:0000255" key="2">
    <source>
        <dbReference type="PROSITE-ProRule" id="PRU00441"/>
    </source>
</evidence>
<evidence type="ECO:0000269" key="3">
    <source>
    </source>
</evidence>
<evidence type="ECO:0000305" key="4"/>